<dbReference type="EC" id="2.1.1.192" evidence="1"/>
<dbReference type="EMBL" id="CP000612">
    <property type="protein sequence ID" value="ABO50235.1"/>
    <property type="molecule type" value="Genomic_DNA"/>
</dbReference>
<dbReference type="RefSeq" id="WP_011878049.1">
    <property type="nucleotide sequence ID" value="NC_009253.1"/>
</dbReference>
<dbReference type="SMR" id="A4J582"/>
<dbReference type="STRING" id="349161.Dred_1708"/>
<dbReference type="KEGG" id="drm:Dred_1708"/>
<dbReference type="eggNOG" id="COG0820">
    <property type="taxonomic scope" value="Bacteria"/>
</dbReference>
<dbReference type="HOGENOM" id="CLU_029101_0_1_9"/>
<dbReference type="OrthoDB" id="9793973at2"/>
<dbReference type="Proteomes" id="UP000001556">
    <property type="component" value="Chromosome"/>
</dbReference>
<dbReference type="GO" id="GO:0005737">
    <property type="term" value="C:cytoplasm"/>
    <property type="evidence" value="ECO:0007669"/>
    <property type="project" value="UniProtKB-SubCell"/>
</dbReference>
<dbReference type="GO" id="GO:0051539">
    <property type="term" value="F:4 iron, 4 sulfur cluster binding"/>
    <property type="evidence" value="ECO:0007669"/>
    <property type="project" value="UniProtKB-UniRule"/>
</dbReference>
<dbReference type="GO" id="GO:0046872">
    <property type="term" value="F:metal ion binding"/>
    <property type="evidence" value="ECO:0007669"/>
    <property type="project" value="UniProtKB-KW"/>
</dbReference>
<dbReference type="GO" id="GO:0070040">
    <property type="term" value="F:rRNA (adenine(2503)-C2-)-methyltransferase activity"/>
    <property type="evidence" value="ECO:0007669"/>
    <property type="project" value="UniProtKB-UniRule"/>
</dbReference>
<dbReference type="GO" id="GO:0019843">
    <property type="term" value="F:rRNA binding"/>
    <property type="evidence" value="ECO:0007669"/>
    <property type="project" value="UniProtKB-UniRule"/>
</dbReference>
<dbReference type="GO" id="GO:0002935">
    <property type="term" value="F:tRNA (adenine(37)-C2)-methyltransferase activity"/>
    <property type="evidence" value="ECO:0007669"/>
    <property type="project" value="UniProtKB-UniRule"/>
</dbReference>
<dbReference type="GO" id="GO:0000049">
    <property type="term" value="F:tRNA binding"/>
    <property type="evidence" value="ECO:0007669"/>
    <property type="project" value="UniProtKB-UniRule"/>
</dbReference>
<dbReference type="GO" id="GO:0070475">
    <property type="term" value="P:rRNA base methylation"/>
    <property type="evidence" value="ECO:0007669"/>
    <property type="project" value="UniProtKB-UniRule"/>
</dbReference>
<dbReference type="GO" id="GO:0030488">
    <property type="term" value="P:tRNA methylation"/>
    <property type="evidence" value="ECO:0007669"/>
    <property type="project" value="UniProtKB-UniRule"/>
</dbReference>
<dbReference type="CDD" id="cd01335">
    <property type="entry name" value="Radical_SAM"/>
    <property type="match status" value="1"/>
</dbReference>
<dbReference type="FunFam" id="1.10.150.530:FF:000003">
    <property type="entry name" value="Dual-specificity RNA methyltransferase RlmN"/>
    <property type="match status" value="1"/>
</dbReference>
<dbReference type="FunFam" id="3.20.20.70:FF:000014">
    <property type="entry name" value="Probable dual-specificity RNA methyltransferase RlmN"/>
    <property type="match status" value="1"/>
</dbReference>
<dbReference type="Gene3D" id="1.10.150.530">
    <property type="match status" value="1"/>
</dbReference>
<dbReference type="Gene3D" id="3.20.20.70">
    <property type="entry name" value="Aldolase class I"/>
    <property type="match status" value="1"/>
</dbReference>
<dbReference type="HAMAP" id="MF_01849">
    <property type="entry name" value="RNA_methyltr_RlmN"/>
    <property type="match status" value="1"/>
</dbReference>
<dbReference type="InterPro" id="IPR013785">
    <property type="entry name" value="Aldolase_TIM"/>
</dbReference>
<dbReference type="InterPro" id="IPR006638">
    <property type="entry name" value="Elp3/MiaA/NifB-like_rSAM"/>
</dbReference>
<dbReference type="InterPro" id="IPR040072">
    <property type="entry name" value="Methyltransferase_A"/>
</dbReference>
<dbReference type="InterPro" id="IPR048641">
    <property type="entry name" value="RlmN_N"/>
</dbReference>
<dbReference type="InterPro" id="IPR027492">
    <property type="entry name" value="RNA_MTrfase_RlmN"/>
</dbReference>
<dbReference type="InterPro" id="IPR004383">
    <property type="entry name" value="rRNA_lsu_MTrfase_RlmN/Cfr"/>
</dbReference>
<dbReference type="InterPro" id="IPR007197">
    <property type="entry name" value="rSAM"/>
</dbReference>
<dbReference type="NCBIfam" id="TIGR00048">
    <property type="entry name" value="rRNA_mod_RlmN"/>
    <property type="match status" value="1"/>
</dbReference>
<dbReference type="PANTHER" id="PTHR30544">
    <property type="entry name" value="23S RRNA METHYLTRANSFERASE"/>
    <property type="match status" value="1"/>
</dbReference>
<dbReference type="PANTHER" id="PTHR30544:SF5">
    <property type="entry name" value="RADICAL SAM CORE DOMAIN-CONTAINING PROTEIN"/>
    <property type="match status" value="1"/>
</dbReference>
<dbReference type="Pfam" id="PF04055">
    <property type="entry name" value="Radical_SAM"/>
    <property type="match status" value="1"/>
</dbReference>
<dbReference type="Pfam" id="PF21016">
    <property type="entry name" value="RlmN_N"/>
    <property type="match status" value="1"/>
</dbReference>
<dbReference type="PIRSF" id="PIRSF006004">
    <property type="entry name" value="CHP00048"/>
    <property type="match status" value="1"/>
</dbReference>
<dbReference type="SFLD" id="SFLDF00275">
    <property type="entry name" value="adenosine_C2_methyltransferase"/>
    <property type="match status" value="1"/>
</dbReference>
<dbReference type="SFLD" id="SFLDS00029">
    <property type="entry name" value="Radical_SAM"/>
    <property type="match status" value="1"/>
</dbReference>
<dbReference type="SMART" id="SM00729">
    <property type="entry name" value="Elp3"/>
    <property type="match status" value="1"/>
</dbReference>
<dbReference type="SUPFAM" id="SSF102114">
    <property type="entry name" value="Radical SAM enzymes"/>
    <property type="match status" value="1"/>
</dbReference>
<dbReference type="PROSITE" id="PS51918">
    <property type="entry name" value="RADICAL_SAM"/>
    <property type="match status" value="1"/>
</dbReference>
<keyword id="KW-0004">4Fe-4S</keyword>
<keyword id="KW-0963">Cytoplasm</keyword>
<keyword id="KW-1015">Disulfide bond</keyword>
<keyword id="KW-0408">Iron</keyword>
<keyword id="KW-0411">Iron-sulfur</keyword>
<keyword id="KW-0479">Metal-binding</keyword>
<keyword id="KW-0489">Methyltransferase</keyword>
<keyword id="KW-1185">Reference proteome</keyword>
<keyword id="KW-0698">rRNA processing</keyword>
<keyword id="KW-0949">S-adenosyl-L-methionine</keyword>
<keyword id="KW-0808">Transferase</keyword>
<keyword id="KW-0819">tRNA processing</keyword>
<reference key="1">
    <citation type="submission" date="2007-03" db="EMBL/GenBank/DDBJ databases">
        <title>Complete sequence of Desulfotomaculum reducens MI-1.</title>
        <authorList>
            <consortium name="US DOE Joint Genome Institute"/>
            <person name="Copeland A."/>
            <person name="Lucas S."/>
            <person name="Lapidus A."/>
            <person name="Barry K."/>
            <person name="Detter J.C."/>
            <person name="Glavina del Rio T."/>
            <person name="Hammon N."/>
            <person name="Israni S."/>
            <person name="Dalin E."/>
            <person name="Tice H."/>
            <person name="Pitluck S."/>
            <person name="Sims D."/>
            <person name="Brettin T."/>
            <person name="Bruce D."/>
            <person name="Han C."/>
            <person name="Tapia R."/>
            <person name="Schmutz J."/>
            <person name="Larimer F."/>
            <person name="Land M."/>
            <person name="Hauser L."/>
            <person name="Kyrpides N."/>
            <person name="Kim E."/>
            <person name="Tebo B.M."/>
            <person name="Richardson P."/>
        </authorList>
    </citation>
    <scope>NUCLEOTIDE SEQUENCE [LARGE SCALE GENOMIC DNA]</scope>
    <source>
        <strain>ATCC BAA-1160 / DSM 100696 / MI-1</strain>
    </source>
</reference>
<name>RLMN_DESRM</name>
<feature type="chain" id="PRO_0000350153" description="Probable dual-specificity RNA methyltransferase RlmN">
    <location>
        <begin position="1"/>
        <end position="350"/>
    </location>
</feature>
<feature type="domain" description="Radical SAM core" evidence="2">
    <location>
        <begin position="104"/>
        <end position="334"/>
    </location>
</feature>
<feature type="active site" description="Proton acceptor" evidence="1">
    <location>
        <position position="98"/>
    </location>
</feature>
<feature type="active site" description="S-methylcysteine intermediate" evidence="1">
    <location>
        <position position="339"/>
    </location>
</feature>
<feature type="binding site" evidence="1">
    <location>
        <position position="118"/>
    </location>
    <ligand>
        <name>[4Fe-4S] cluster</name>
        <dbReference type="ChEBI" id="CHEBI:49883"/>
        <note>4Fe-4S-S-AdoMet</note>
    </ligand>
</feature>
<feature type="binding site" evidence="1">
    <location>
        <position position="122"/>
    </location>
    <ligand>
        <name>[4Fe-4S] cluster</name>
        <dbReference type="ChEBI" id="CHEBI:49883"/>
        <note>4Fe-4S-S-AdoMet</note>
    </ligand>
</feature>
<feature type="binding site" evidence="1">
    <location>
        <position position="125"/>
    </location>
    <ligand>
        <name>[4Fe-4S] cluster</name>
        <dbReference type="ChEBI" id="CHEBI:49883"/>
        <note>4Fe-4S-S-AdoMet</note>
    </ligand>
</feature>
<feature type="binding site" evidence="1">
    <location>
        <begin position="165"/>
        <end position="166"/>
    </location>
    <ligand>
        <name>S-adenosyl-L-methionine</name>
        <dbReference type="ChEBI" id="CHEBI:59789"/>
    </ligand>
</feature>
<feature type="binding site" evidence="1">
    <location>
        <position position="197"/>
    </location>
    <ligand>
        <name>S-adenosyl-L-methionine</name>
        <dbReference type="ChEBI" id="CHEBI:59789"/>
    </ligand>
</feature>
<feature type="binding site" evidence="1">
    <location>
        <begin position="220"/>
        <end position="222"/>
    </location>
    <ligand>
        <name>S-adenosyl-L-methionine</name>
        <dbReference type="ChEBI" id="CHEBI:59789"/>
    </ligand>
</feature>
<feature type="binding site" evidence="1">
    <location>
        <position position="296"/>
    </location>
    <ligand>
        <name>S-adenosyl-L-methionine</name>
        <dbReference type="ChEBI" id="CHEBI:59789"/>
    </ligand>
</feature>
<feature type="disulfide bond" description="(transient)" evidence="1">
    <location>
        <begin position="111"/>
        <end position="339"/>
    </location>
</feature>
<proteinExistence type="inferred from homology"/>
<sequence length="350" mass="39503">MCRNNNNKLNLRDLNQSEIQHFIKDLGEKPFRADQICRWVFAQGVSSFDEMTNLSKGLRAKLNELTTLSQATILTSQVSAKGDTIKFLFGLPDGHAVESVLMKHTYGNSVCVSTQVGCRMGCLFCASTINGLVRNLSPGEIYDQVLGIQRETGERVSHIVIMGAGEPLDNFDNVLKFLENIHAEYGLNIGYRHITLSTCGLVPRMQELALRKLPITLAVSLHAPNDDLRDKLVPINRRYKIHQLIEACSNYIEITGRRITFEYALLSGINDSDEHVRQLAALLKNLLCHINLIPVNPVEEKEFIRTPPEKVERFRQYLEKVGLNVTVRRELGGDIDAACGQLRRRYESKN</sequence>
<accession>A4J582</accession>
<gene>
    <name evidence="1" type="primary">rlmN</name>
    <name type="ordered locus">Dred_1708</name>
</gene>
<organism>
    <name type="scientific">Desulforamulus reducens (strain ATCC BAA-1160 / DSM 100696 / MI-1)</name>
    <name type="common">Desulfotomaculum reducens</name>
    <dbReference type="NCBI Taxonomy" id="349161"/>
    <lineage>
        <taxon>Bacteria</taxon>
        <taxon>Bacillati</taxon>
        <taxon>Bacillota</taxon>
        <taxon>Clostridia</taxon>
        <taxon>Eubacteriales</taxon>
        <taxon>Peptococcaceae</taxon>
        <taxon>Desulforamulus</taxon>
    </lineage>
</organism>
<protein>
    <recommendedName>
        <fullName evidence="1">Probable dual-specificity RNA methyltransferase RlmN</fullName>
        <ecNumber evidence="1">2.1.1.192</ecNumber>
    </recommendedName>
    <alternativeName>
        <fullName evidence="1">23S rRNA (adenine(2503)-C(2))-methyltransferase</fullName>
    </alternativeName>
    <alternativeName>
        <fullName evidence="1">23S rRNA m2A2503 methyltransferase</fullName>
    </alternativeName>
    <alternativeName>
        <fullName evidence="1">Ribosomal RNA large subunit methyltransferase N</fullName>
    </alternativeName>
    <alternativeName>
        <fullName evidence="1">tRNA (adenine(37)-C(2))-methyltransferase</fullName>
    </alternativeName>
    <alternativeName>
        <fullName evidence="1">tRNA m2A37 methyltransferase</fullName>
    </alternativeName>
</protein>
<comment type="function">
    <text evidence="1">Specifically methylates position 2 of adenine 2503 in 23S rRNA and position 2 of adenine 37 in tRNAs.</text>
</comment>
<comment type="catalytic activity">
    <reaction evidence="1">
        <text>adenosine(2503) in 23S rRNA + 2 reduced [2Fe-2S]-[ferredoxin] + 2 S-adenosyl-L-methionine = 2-methyladenosine(2503) in 23S rRNA + 5'-deoxyadenosine + L-methionine + 2 oxidized [2Fe-2S]-[ferredoxin] + S-adenosyl-L-homocysteine</text>
        <dbReference type="Rhea" id="RHEA:42916"/>
        <dbReference type="Rhea" id="RHEA-COMP:10000"/>
        <dbReference type="Rhea" id="RHEA-COMP:10001"/>
        <dbReference type="Rhea" id="RHEA-COMP:10152"/>
        <dbReference type="Rhea" id="RHEA-COMP:10282"/>
        <dbReference type="ChEBI" id="CHEBI:17319"/>
        <dbReference type="ChEBI" id="CHEBI:33737"/>
        <dbReference type="ChEBI" id="CHEBI:33738"/>
        <dbReference type="ChEBI" id="CHEBI:57844"/>
        <dbReference type="ChEBI" id="CHEBI:57856"/>
        <dbReference type="ChEBI" id="CHEBI:59789"/>
        <dbReference type="ChEBI" id="CHEBI:74411"/>
        <dbReference type="ChEBI" id="CHEBI:74497"/>
        <dbReference type="EC" id="2.1.1.192"/>
    </reaction>
</comment>
<comment type="catalytic activity">
    <reaction evidence="1">
        <text>adenosine(37) in tRNA + 2 reduced [2Fe-2S]-[ferredoxin] + 2 S-adenosyl-L-methionine = 2-methyladenosine(37) in tRNA + 5'-deoxyadenosine + L-methionine + 2 oxidized [2Fe-2S]-[ferredoxin] + S-adenosyl-L-homocysteine</text>
        <dbReference type="Rhea" id="RHEA:43332"/>
        <dbReference type="Rhea" id="RHEA-COMP:10000"/>
        <dbReference type="Rhea" id="RHEA-COMP:10001"/>
        <dbReference type="Rhea" id="RHEA-COMP:10162"/>
        <dbReference type="Rhea" id="RHEA-COMP:10485"/>
        <dbReference type="ChEBI" id="CHEBI:17319"/>
        <dbReference type="ChEBI" id="CHEBI:33737"/>
        <dbReference type="ChEBI" id="CHEBI:33738"/>
        <dbReference type="ChEBI" id="CHEBI:57844"/>
        <dbReference type="ChEBI" id="CHEBI:57856"/>
        <dbReference type="ChEBI" id="CHEBI:59789"/>
        <dbReference type="ChEBI" id="CHEBI:74411"/>
        <dbReference type="ChEBI" id="CHEBI:74497"/>
        <dbReference type="EC" id="2.1.1.192"/>
    </reaction>
</comment>
<comment type="cofactor">
    <cofactor evidence="1">
        <name>[4Fe-4S] cluster</name>
        <dbReference type="ChEBI" id="CHEBI:49883"/>
    </cofactor>
    <text evidence="1">Binds 1 [4Fe-4S] cluster. The cluster is coordinated with 3 cysteines and an exchangeable S-adenosyl-L-methionine.</text>
</comment>
<comment type="subcellular location">
    <subcellularLocation>
        <location evidence="1">Cytoplasm</location>
    </subcellularLocation>
</comment>
<comment type="miscellaneous">
    <text evidence="1">Reaction proceeds by a ping-pong mechanism involving intermediate methylation of a conserved cysteine residue.</text>
</comment>
<comment type="similarity">
    <text evidence="1">Belongs to the radical SAM superfamily. RlmN family.</text>
</comment>
<evidence type="ECO:0000255" key="1">
    <source>
        <dbReference type="HAMAP-Rule" id="MF_01849"/>
    </source>
</evidence>
<evidence type="ECO:0000255" key="2">
    <source>
        <dbReference type="PROSITE-ProRule" id="PRU01266"/>
    </source>
</evidence>